<proteinExistence type="inferred from homology"/>
<keyword id="KW-0008">Acetylcholine receptor inhibiting toxin</keyword>
<keyword id="KW-1015">Disulfide bond</keyword>
<keyword id="KW-0872">Ion channel impairing toxin</keyword>
<keyword id="KW-0528">Neurotoxin</keyword>
<keyword id="KW-0629">Postsynaptic neurotoxin</keyword>
<keyword id="KW-0964">Secreted</keyword>
<keyword id="KW-0732">Signal</keyword>
<keyword id="KW-0800">Toxin</keyword>
<name>3NO29_NAJSP</name>
<sequence length="86" mass="9836">MKTLLLTLVVVTIVCLDLGYTLTCLNCPEMFCGKFQTCRNGEKICFKMLQQRRPFSLRYIRGCAATCPGTKPRDMVECCNTDRCNR</sequence>
<protein>
    <recommendedName>
        <fullName>Weak neurotoxin 9</fullName>
        <shortName>Wntx-9</shortName>
    </recommendedName>
</protein>
<accession>Q9W7I3</accession>
<comment type="function">
    <text evidence="2">Binds with low affinity to muscular (alpha-1-beta-1-delta-epsilon/CHRNA1-CHRNB1-CHRND-CHRNE) and very low affinity to neuronal (alpha-7/CHRNA7) nicotinic acetylcholine receptor (nAChR).</text>
</comment>
<comment type="subcellular location">
    <subcellularLocation>
        <location evidence="1">Secreted</location>
    </subcellularLocation>
</comment>
<comment type="tissue specificity">
    <text evidence="4">Expressed by the venom gland.</text>
</comment>
<comment type="similarity">
    <text evidence="4">Belongs to the three-finger toxin family. Ancestral subfamily. Orphan group II sub-subfamily.</text>
</comment>
<reference key="1">
    <citation type="journal article" date="2002" name="Eur. J. Biochem.">
        <title>A synthetic weak neurotoxin binds with low affinity to Torpedo and chicken alpha7 nicotinic acetylcholine receptors.</title>
        <authorList>
            <person name="Poh S.L."/>
            <person name="Mourier G."/>
            <person name="Thai R."/>
            <person name="Armugam A."/>
            <person name="Molgo J."/>
            <person name="Servent D."/>
            <person name="Jeyaseelan K."/>
            <person name="Menez A."/>
        </authorList>
    </citation>
    <scope>NUCLEOTIDE SEQUENCE [MRNA]</scope>
    <source>
        <tissue>Venom gland</tissue>
    </source>
</reference>
<dbReference type="EMBL" id="AF098924">
    <property type="protein sequence ID" value="AAD39354.1"/>
    <property type="molecule type" value="mRNA"/>
</dbReference>
<dbReference type="SMR" id="Q9W7I3"/>
<dbReference type="GO" id="GO:0005576">
    <property type="term" value="C:extracellular region"/>
    <property type="evidence" value="ECO:0007669"/>
    <property type="project" value="UniProtKB-SubCell"/>
</dbReference>
<dbReference type="GO" id="GO:0030550">
    <property type="term" value="F:acetylcholine receptor inhibitor activity"/>
    <property type="evidence" value="ECO:0007669"/>
    <property type="project" value="UniProtKB-KW"/>
</dbReference>
<dbReference type="GO" id="GO:0099106">
    <property type="term" value="F:ion channel regulator activity"/>
    <property type="evidence" value="ECO:0007669"/>
    <property type="project" value="UniProtKB-KW"/>
</dbReference>
<dbReference type="GO" id="GO:0090729">
    <property type="term" value="F:toxin activity"/>
    <property type="evidence" value="ECO:0007669"/>
    <property type="project" value="UniProtKB-KW"/>
</dbReference>
<dbReference type="CDD" id="cd00206">
    <property type="entry name" value="TFP_snake_toxin"/>
    <property type="match status" value="1"/>
</dbReference>
<dbReference type="FunFam" id="2.10.60.10:FF:000024">
    <property type="entry name" value="Cytotoxin 1"/>
    <property type="match status" value="1"/>
</dbReference>
<dbReference type="Gene3D" id="2.10.60.10">
    <property type="entry name" value="CD59"/>
    <property type="match status" value="1"/>
</dbReference>
<dbReference type="InterPro" id="IPR003571">
    <property type="entry name" value="Snake_3FTx"/>
</dbReference>
<dbReference type="InterPro" id="IPR045860">
    <property type="entry name" value="Snake_toxin-like_sf"/>
</dbReference>
<dbReference type="InterPro" id="IPR018354">
    <property type="entry name" value="Snake_toxin_con_site"/>
</dbReference>
<dbReference type="InterPro" id="IPR054131">
    <property type="entry name" value="Toxin_cobra-type"/>
</dbReference>
<dbReference type="Pfam" id="PF21947">
    <property type="entry name" value="Toxin_cobra-type"/>
    <property type="match status" value="1"/>
</dbReference>
<dbReference type="SUPFAM" id="SSF57302">
    <property type="entry name" value="Snake toxin-like"/>
    <property type="match status" value="1"/>
</dbReference>
<dbReference type="PROSITE" id="PS00272">
    <property type="entry name" value="SNAKE_TOXIN"/>
    <property type="match status" value="1"/>
</dbReference>
<feature type="signal peptide" evidence="1">
    <location>
        <begin position="1"/>
        <end position="21"/>
    </location>
</feature>
<feature type="chain" id="PRO_0000035478" description="Weak neurotoxin 9">
    <location>
        <begin position="22"/>
        <end position="86"/>
    </location>
</feature>
<feature type="disulfide bond" evidence="3">
    <location>
        <begin position="24"/>
        <end position="45"/>
    </location>
</feature>
<feature type="disulfide bond" evidence="3">
    <location>
        <begin position="27"/>
        <end position="32"/>
    </location>
</feature>
<feature type="disulfide bond" evidence="3">
    <location>
        <begin position="38"/>
        <end position="63"/>
    </location>
</feature>
<feature type="disulfide bond" evidence="3">
    <location>
        <begin position="67"/>
        <end position="78"/>
    </location>
</feature>
<feature type="disulfide bond" evidence="3">
    <location>
        <begin position="79"/>
        <end position="84"/>
    </location>
</feature>
<evidence type="ECO:0000250" key="1"/>
<evidence type="ECO:0000250" key="2">
    <source>
        <dbReference type="UniProtKB" id="O42255"/>
    </source>
</evidence>
<evidence type="ECO:0000250" key="3">
    <source>
        <dbReference type="UniProtKB" id="Q8AY51"/>
    </source>
</evidence>
<evidence type="ECO:0000305" key="4"/>
<organism>
    <name type="scientific">Naja sputatrix</name>
    <name type="common">Malayan spitting cobra</name>
    <name type="synonym">Naja naja sputatrix</name>
    <dbReference type="NCBI Taxonomy" id="33626"/>
    <lineage>
        <taxon>Eukaryota</taxon>
        <taxon>Metazoa</taxon>
        <taxon>Chordata</taxon>
        <taxon>Craniata</taxon>
        <taxon>Vertebrata</taxon>
        <taxon>Euteleostomi</taxon>
        <taxon>Lepidosauria</taxon>
        <taxon>Squamata</taxon>
        <taxon>Bifurcata</taxon>
        <taxon>Unidentata</taxon>
        <taxon>Episquamata</taxon>
        <taxon>Toxicofera</taxon>
        <taxon>Serpentes</taxon>
        <taxon>Colubroidea</taxon>
        <taxon>Elapidae</taxon>
        <taxon>Elapinae</taxon>
        <taxon>Naja</taxon>
    </lineage>
</organism>